<proteinExistence type="evidence at protein level"/>
<dbReference type="EMBL" id="AF078860">
    <property type="protein sequence ID" value="AAD44492.1"/>
    <property type="molecule type" value="mRNA"/>
</dbReference>
<dbReference type="EMBL" id="AF135160">
    <property type="protein sequence ID" value="AAF43784.1"/>
    <property type="molecule type" value="mRNA"/>
</dbReference>
<dbReference type="EMBL" id="AF151038">
    <property type="protein sequence ID" value="AAF36124.1"/>
    <property type="status" value="ALT_FRAME"/>
    <property type="molecule type" value="mRNA"/>
</dbReference>
<dbReference type="EMBL" id="AL136659">
    <property type="protein sequence ID" value="CAB66594.1"/>
    <property type="molecule type" value="mRNA"/>
</dbReference>
<dbReference type="EMBL" id="AK000285">
    <property type="protein sequence ID" value="BAA91054.1"/>
    <property type="molecule type" value="mRNA"/>
</dbReference>
<dbReference type="EMBL" id="CR533495">
    <property type="protein sequence ID" value="CAG38526.1"/>
    <property type="molecule type" value="mRNA"/>
</dbReference>
<dbReference type="EMBL" id="CH471054">
    <property type="protein sequence ID" value="EAW97484.1"/>
    <property type="molecule type" value="Genomic_DNA"/>
</dbReference>
<dbReference type="EMBL" id="BC040240">
    <property type="protein sequence ID" value="AAH40240.1"/>
    <property type="molecule type" value="mRNA"/>
</dbReference>
<dbReference type="EMBL" id="AB051626">
    <property type="protein sequence ID" value="BAB54953.1"/>
    <property type="molecule type" value="Genomic_DNA"/>
</dbReference>
<dbReference type="CCDS" id="CCDS9045.1"/>
<dbReference type="RefSeq" id="NP_054769.1">
    <property type="nucleotide sequence ID" value="NM_014050.4"/>
</dbReference>
<dbReference type="RefSeq" id="NP_751917.1">
    <property type="nucleotide sequence ID" value="NM_172177.5"/>
</dbReference>
<dbReference type="PDB" id="3J7Y">
    <property type="method" value="EM"/>
    <property type="resolution" value="3.40 A"/>
    <property type="chains" value="a=1-142"/>
</dbReference>
<dbReference type="PDB" id="3J9M">
    <property type="method" value="EM"/>
    <property type="resolution" value="3.50 A"/>
    <property type="chains" value="a=1-142"/>
</dbReference>
<dbReference type="PDB" id="5OOL">
    <property type="method" value="EM"/>
    <property type="resolution" value="3.06 A"/>
    <property type="chains" value="a=1-142"/>
</dbReference>
<dbReference type="PDB" id="5OOM">
    <property type="method" value="EM"/>
    <property type="resolution" value="3.03 A"/>
    <property type="chains" value="a=1-142"/>
</dbReference>
<dbReference type="PDB" id="6I9R">
    <property type="method" value="EM"/>
    <property type="resolution" value="3.90 A"/>
    <property type="chains" value="a=1-142"/>
</dbReference>
<dbReference type="PDB" id="6NU2">
    <property type="method" value="EM"/>
    <property type="resolution" value="3.90 A"/>
    <property type="chains" value="a=35-142"/>
</dbReference>
<dbReference type="PDB" id="6NU3">
    <property type="method" value="EM"/>
    <property type="resolution" value="4.40 A"/>
    <property type="chains" value="a=1-142"/>
</dbReference>
<dbReference type="PDB" id="6VLZ">
    <property type="method" value="EM"/>
    <property type="resolution" value="2.97 A"/>
    <property type="chains" value="a=1-142"/>
</dbReference>
<dbReference type="PDB" id="6VMI">
    <property type="method" value="EM"/>
    <property type="resolution" value="2.96 A"/>
    <property type="chains" value="a=1-142"/>
</dbReference>
<dbReference type="PDB" id="6ZM5">
    <property type="method" value="EM"/>
    <property type="resolution" value="2.89 A"/>
    <property type="chains" value="a=1-142"/>
</dbReference>
<dbReference type="PDB" id="6ZM6">
    <property type="method" value="EM"/>
    <property type="resolution" value="2.59 A"/>
    <property type="chains" value="a=1-142"/>
</dbReference>
<dbReference type="PDB" id="6ZS9">
    <property type="method" value="EM"/>
    <property type="resolution" value="4.00 A"/>
    <property type="chains" value="a=1-142"/>
</dbReference>
<dbReference type="PDB" id="6ZSA">
    <property type="method" value="EM"/>
    <property type="resolution" value="4.00 A"/>
    <property type="chains" value="a=1-142"/>
</dbReference>
<dbReference type="PDB" id="6ZSB">
    <property type="method" value="EM"/>
    <property type="resolution" value="4.50 A"/>
    <property type="chains" value="a=1-142"/>
</dbReference>
<dbReference type="PDB" id="6ZSC">
    <property type="method" value="EM"/>
    <property type="resolution" value="3.50 A"/>
    <property type="chains" value="a=1-142"/>
</dbReference>
<dbReference type="PDB" id="6ZSD">
    <property type="method" value="EM"/>
    <property type="resolution" value="3.70 A"/>
    <property type="chains" value="a=1-142"/>
</dbReference>
<dbReference type="PDB" id="6ZSE">
    <property type="method" value="EM"/>
    <property type="resolution" value="5.00 A"/>
    <property type="chains" value="a=1-142"/>
</dbReference>
<dbReference type="PDB" id="6ZSG">
    <property type="method" value="EM"/>
    <property type="resolution" value="4.00 A"/>
    <property type="chains" value="a=1-142"/>
</dbReference>
<dbReference type="PDB" id="7A5F">
    <property type="method" value="EM"/>
    <property type="resolution" value="4.40 A"/>
    <property type="chains" value="a3=1-142"/>
</dbReference>
<dbReference type="PDB" id="7A5G">
    <property type="method" value="EM"/>
    <property type="resolution" value="4.33 A"/>
    <property type="chains" value="a3=1-142"/>
</dbReference>
<dbReference type="PDB" id="7A5H">
    <property type="method" value="EM"/>
    <property type="resolution" value="3.30 A"/>
    <property type="chains" value="a=1-142"/>
</dbReference>
<dbReference type="PDB" id="7A5I">
    <property type="method" value="EM"/>
    <property type="resolution" value="3.70 A"/>
    <property type="chains" value="a3=1-142"/>
</dbReference>
<dbReference type="PDB" id="7A5J">
    <property type="method" value="EM"/>
    <property type="resolution" value="3.10 A"/>
    <property type="chains" value="a=1-142"/>
</dbReference>
<dbReference type="PDB" id="7A5K">
    <property type="method" value="EM"/>
    <property type="resolution" value="3.70 A"/>
    <property type="chains" value="a3=1-142"/>
</dbReference>
<dbReference type="PDB" id="7L08">
    <property type="method" value="EM"/>
    <property type="resolution" value="3.49 A"/>
    <property type="chains" value="a=1-142"/>
</dbReference>
<dbReference type="PDB" id="7L20">
    <property type="method" value="EM"/>
    <property type="resolution" value="3.15 A"/>
    <property type="chains" value="a=1-142"/>
</dbReference>
<dbReference type="PDB" id="7O9K">
    <property type="method" value="EM"/>
    <property type="resolution" value="3.10 A"/>
    <property type="chains" value="a=1-142"/>
</dbReference>
<dbReference type="PDB" id="7O9M">
    <property type="method" value="EM"/>
    <property type="resolution" value="2.50 A"/>
    <property type="chains" value="a=1-142"/>
</dbReference>
<dbReference type="PDB" id="7ODR">
    <property type="method" value="EM"/>
    <property type="resolution" value="2.90 A"/>
    <property type="chains" value="a=1-142"/>
</dbReference>
<dbReference type="PDB" id="7ODS">
    <property type="method" value="EM"/>
    <property type="resolution" value="3.10 A"/>
    <property type="chains" value="a=1-142"/>
</dbReference>
<dbReference type="PDB" id="7ODT">
    <property type="method" value="EM"/>
    <property type="resolution" value="3.10 A"/>
    <property type="chains" value="a=1-142"/>
</dbReference>
<dbReference type="PDB" id="7OF0">
    <property type="method" value="EM"/>
    <property type="resolution" value="2.20 A"/>
    <property type="chains" value="a=1-142"/>
</dbReference>
<dbReference type="PDB" id="7OF2">
    <property type="method" value="EM"/>
    <property type="resolution" value="2.70 A"/>
    <property type="chains" value="a=1-142"/>
</dbReference>
<dbReference type="PDB" id="7OF3">
    <property type="method" value="EM"/>
    <property type="resolution" value="2.70 A"/>
    <property type="chains" value="a=1-142"/>
</dbReference>
<dbReference type="PDB" id="7OF4">
    <property type="method" value="EM"/>
    <property type="resolution" value="2.70 A"/>
    <property type="chains" value="a=1-142"/>
</dbReference>
<dbReference type="PDB" id="7OF5">
    <property type="method" value="EM"/>
    <property type="resolution" value="2.90 A"/>
    <property type="chains" value="a=1-142"/>
</dbReference>
<dbReference type="PDB" id="7OF6">
    <property type="method" value="EM"/>
    <property type="resolution" value="2.60 A"/>
    <property type="chains" value="a=1-142"/>
</dbReference>
<dbReference type="PDB" id="7OF7">
    <property type="method" value="EM"/>
    <property type="resolution" value="2.50 A"/>
    <property type="chains" value="a=1-142"/>
</dbReference>
<dbReference type="PDB" id="7OG4">
    <property type="method" value="EM"/>
    <property type="resolution" value="3.80 A"/>
    <property type="chains" value="a=1-142"/>
</dbReference>
<dbReference type="PDB" id="7OI6">
    <property type="method" value="EM"/>
    <property type="resolution" value="5.70 A"/>
    <property type="chains" value="a=1-142"/>
</dbReference>
<dbReference type="PDB" id="7OI7">
    <property type="method" value="EM"/>
    <property type="resolution" value="3.50 A"/>
    <property type="chains" value="a=1-142"/>
</dbReference>
<dbReference type="PDB" id="7OI8">
    <property type="method" value="EM"/>
    <property type="resolution" value="3.50 A"/>
    <property type="chains" value="a=1-142"/>
</dbReference>
<dbReference type="PDB" id="7OI9">
    <property type="method" value="EM"/>
    <property type="resolution" value="3.30 A"/>
    <property type="chains" value="a=1-142"/>
</dbReference>
<dbReference type="PDB" id="7OIA">
    <property type="method" value="EM"/>
    <property type="resolution" value="3.20 A"/>
    <property type="chains" value="a=1-142"/>
</dbReference>
<dbReference type="PDB" id="7OIB">
    <property type="method" value="EM"/>
    <property type="resolution" value="3.30 A"/>
    <property type="chains" value="a=1-142"/>
</dbReference>
<dbReference type="PDB" id="7OIC">
    <property type="method" value="EM"/>
    <property type="resolution" value="3.10 A"/>
    <property type="chains" value="a=1-142"/>
</dbReference>
<dbReference type="PDB" id="7OID">
    <property type="method" value="EM"/>
    <property type="resolution" value="3.70 A"/>
    <property type="chains" value="a=1-142"/>
</dbReference>
<dbReference type="PDB" id="7OIE">
    <property type="method" value="EM"/>
    <property type="resolution" value="3.50 A"/>
    <property type="chains" value="a=1-142"/>
</dbReference>
<dbReference type="PDB" id="7PD3">
    <property type="method" value="EM"/>
    <property type="resolution" value="3.40 A"/>
    <property type="chains" value="a=1-142"/>
</dbReference>
<dbReference type="PDB" id="7PO4">
    <property type="method" value="EM"/>
    <property type="resolution" value="2.56 A"/>
    <property type="chains" value="a=1-142"/>
</dbReference>
<dbReference type="PDB" id="7QH6">
    <property type="method" value="EM"/>
    <property type="resolution" value="3.08 A"/>
    <property type="chains" value="a=1-142"/>
</dbReference>
<dbReference type="PDB" id="7QH7">
    <property type="method" value="EM"/>
    <property type="resolution" value="2.89 A"/>
    <property type="chains" value="a=39-142"/>
</dbReference>
<dbReference type="PDB" id="7QI4">
    <property type="method" value="EM"/>
    <property type="resolution" value="2.21 A"/>
    <property type="chains" value="a=1-142"/>
</dbReference>
<dbReference type="PDB" id="7QI5">
    <property type="method" value="EM"/>
    <property type="resolution" value="2.63 A"/>
    <property type="chains" value="a=1-142"/>
</dbReference>
<dbReference type="PDB" id="7QI6">
    <property type="method" value="EM"/>
    <property type="resolution" value="2.98 A"/>
    <property type="chains" value="a=1-142"/>
</dbReference>
<dbReference type="PDB" id="8ANY">
    <property type="method" value="EM"/>
    <property type="resolution" value="2.85 A"/>
    <property type="chains" value="a=1-142"/>
</dbReference>
<dbReference type="PDB" id="8K2A">
    <property type="method" value="EM"/>
    <property type="resolution" value="2.90 A"/>
    <property type="chains" value="Lp=1-142"/>
</dbReference>
<dbReference type="PDB" id="8K2B">
    <property type="method" value="EM"/>
    <property type="resolution" value="3.40 A"/>
    <property type="chains" value="Lp=1-142"/>
</dbReference>
<dbReference type="PDB" id="8OIR">
    <property type="method" value="EM"/>
    <property type="resolution" value="3.10 A"/>
    <property type="chains" value="Br=1-142"/>
</dbReference>
<dbReference type="PDB" id="8OIT">
    <property type="method" value="EM"/>
    <property type="resolution" value="2.90 A"/>
    <property type="chains" value="Br=1-142"/>
</dbReference>
<dbReference type="PDB" id="8PK0">
    <property type="method" value="EM"/>
    <property type="resolution" value="3.03 A"/>
    <property type="chains" value="a=1-142"/>
</dbReference>
<dbReference type="PDB" id="8QSJ">
    <property type="method" value="EM"/>
    <property type="resolution" value="3.00 A"/>
    <property type="chains" value="a=1-142"/>
</dbReference>
<dbReference type="PDB" id="8QU5">
    <property type="method" value="EM"/>
    <property type="resolution" value="2.42 A"/>
    <property type="chains" value="a=1-142"/>
</dbReference>
<dbReference type="PDB" id="8RRI">
    <property type="method" value="EM"/>
    <property type="resolution" value="2.40 A"/>
    <property type="chains" value="a=1-142"/>
</dbReference>
<dbReference type="PDB" id="8XT0">
    <property type="method" value="EM"/>
    <property type="resolution" value="3.20 A"/>
    <property type="chains" value="Lp=1-142"/>
</dbReference>
<dbReference type="PDB" id="8XT1">
    <property type="method" value="EM"/>
    <property type="resolution" value="3.10 A"/>
    <property type="chains" value="Lp=1-142"/>
</dbReference>
<dbReference type="PDB" id="8XT2">
    <property type="method" value="EM"/>
    <property type="resolution" value="3.30 A"/>
    <property type="chains" value="Lp=1-142"/>
</dbReference>
<dbReference type="PDB" id="8XT3">
    <property type="method" value="EM"/>
    <property type="resolution" value="3.10 A"/>
    <property type="chains" value="Lp=1-142"/>
</dbReference>
<dbReference type="PDBsum" id="3J7Y"/>
<dbReference type="PDBsum" id="3J9M"/>
<dbReference type="PDBsum" id="5OOL"/>
<dbReference type="PDBsum" id="5OOM"/>
<dbReference type="PDBsum" id="6I9R"/>
<dbReference type="PDBsum" id="6NU2"/>
<dbReference type="PDBsum" id="6NU3"/>
<dbReference type="PDBsum" id="6VLZ"/>
<dbReference type="PDBsum" id="6VMI"/>
<dbReference type="PDBsum" id="6ZM5"/>
<dbReference type="PDBsum" id="6ZM6"/>
<dbReference type="PDBsum" id="6ZS9"/>
<dbReference type="PDBsum" id="6ZSA"/>
<dbReference type="PDBsum" id="6ZSB"/>
<dbReference type="PDBsum" id="6ZSC"/>
<dbReference type="PDBsum" id="6ZSD"/>
<dbReference type="PDBsum" id="6ZSE"/>
<dbReference type="PDBsum" id="6ZSG"/>
<dbReference type="PDBsum" id="7A5F"/>
<dbReference type="PDBsum" id="7A5G"/>
<dbReference type="PDBsum" id="7A5H"/>
<dbReference type="PDBsum" id="7A5I"/>
<dbReference type="PDBsum" id="7A5J"/>
<dbReference type="PDBsum" id="7A5K"/>
<dbReference type="PDBsum" id="7L08"/>
<dbReference type="PDBsum" id="7L20"/>
<dbReference type="PDBsum" id="7O9K"/>
<dbReference type="PDBsum" id="7O9M"/>
<dbReference type="PDBsum" id="7ODR"/>
<dbReference type="PDBsum" id="7ODS"/>
<dbReference type="PDBsum" id="7ODT"/>
<dbReference type="PDBsum" id="7OF0"/>
<dbReference type="PDBsum" id="7OF2"/>
<dbReference type="PDBsum" id="7OF3"/>
<dbReference type="PDBsum" id="7OF4"/>
<dbReference type="PDBsum" id="7OF5"/>
<dbReference type="PDBsum" id="7OF6"/>
<dbReference type="PDBsum" id="7OF7"/>
<dbReference type="PDBsum" id="7OG4"/>
<dbReference type="PDBsum" id="7OI6"/>
<dbReference type="PDBsum" id="7OI7"/>
<dbReference type="PDBsum" id="7OI8"/>
<dbReference type="PDBsum" id="7OI9"/>
<dbReference type="PDBsum" id="7OIA"/>
<dbReference type="PDBsum" id="7OIB"/>
<dbReference type="PDBsum" id="7OIC"/>
<dbReference type="PDBsum" id="7OID"/>
<dbReference type="PDBsum" id="7OIE"/>
<dbReference type="PDBsum" id="7PD3"/>
<dbReference type="PDBsum" id="7PO4"/>
<dbReference type="PDBsum" id="7QH6"/>
<dbReference type="PDBsum" id="7QH7"/>
<dbReference type="PDBsum" id="7QI4"/>
<dbReference type="PDBsum" id="7QI5"/>
<dbReference type="PDBsum" id="7QI6"/>
<dbReference type="PDBsum" id="8ANY"/>
<dbReference type="PDBsum" id="8K2A"/>
<dbReference type="PDBsum" id="8K2B"/>
<dbReference type="PDBsum" id="8OIR"/>
<dbReference type="PDBsum" id="8OIT"/>
<dbReference type="PDBsum" id="8PK0"/>
<dbReference type="PDBsum" id="8QSJ"/>
<dbReference type="PDBsum" id="8QU5"/>
<dbReference type="PDBsum" id="8RRI"/>
<dbReference type="PDBsum" id="8XT0"/>
<dbReference type="PDBsum" id="8XT1"/>
<dbReference type="PDBsum" id="8XT2"/>
<dbReference type="PDBsum" id="8XT3"/>
<dbReference type="EMDB" id="EMD-0514"/>
<dbReference type="EMDB" id="EMD-0515"/>
<dbReference type="EMDB" id="EMD-11278"/>
<dbReference type="EMDB" id="EMD-11279"/>
<dbReference type="EMDB" id="EMD-11390"/>
<dbReference type="EMDB" id="EMD-11391"/>
<dbReference type="EMDB" id="EMD-11392"/>
<dbReference type="EMDB" id="EMD-11393"/>
<dbReference type="EMDB" id="EMD-11394"/>
<dbReference type="EMDB" id="EMD-11395"/>
<dbReference type="EMDB" id="EMD-11397"/>
<dbReference type="EMDB" id="EMD-11641"/>
<dbReference type="EMDB" id="EMD-11642"/>
<dbReference type="EMDB" id="EMD-11643"/>
<dbReference type="EMDB" id="EMD-11644"/>
<dbReference type="EMDB" id="EMD-11645"/>
<dbReference type="EMDB" id="EMD-11646"/>
<dbReference type="EMDB" id="EMD-12763"/>
<dbReference type="EMDB" id="EMD-12764"/>
<dbReference type="EMDB" id="EMD-12845"/>
<dbReference type="EMDB" id="EMD-12846"/>
<dbReference type="EMDB" id="EMD-12847"/>
<dbReference type="EMDB" id="EMD-12865"/>
<dbReference type="EMDB" id="EMD-12867"/>
<dbReference type="EMDB" id="EMD-12868"/>
<dbReference type="EMDB" id="EMD-12869"/>
<dbReference type="EMDB" id="EMD-12870"/>
<dbReference type="EMDB" id="EMD-12871"/>
<dbReference type="EMDB" id="EMD-12872"/>
<dbReference type="EMDB" id="EMD-12877"/>
<dbReference type="EMDB" id="EMD-12919"/>
<dbReference type="EMDB" id="EMD-12920"/>
<dbReference type="EMDB" id="EMD-12921"/>
<dbReference type="EMDB" id="EMD-12922"/>
<dbReference type="EMDB" id="EMD-12923"/>
<dbReference type="EMDB" id="EMD-12924"/>
<dbReference type="EMDB" id="EMD-12925"/>
<dbReference type="EMDB" id="EMD-12926"/>
<dbReference type="EMDB" id="EMD-12927"/>
<dbReference type="EMDB" id="EMD-13329"/>
<dbReference type="EMDB" id="EMD-13562"/>
<dbReference type="EMDB" id="EMD-13965"/>
<dbReference type="EMDB" id="EMD-13967"/>
<dbReference type="EMDB" id="EMD-13980"/>
<dbReference type="EMDB" id="EMD-13981"/>
<dbReference type="EMDB" id="EMD-13982"/>
<dbReference type="EMDB" id="EMD-15544"/>
<dbReference type="EMDB" id="EMD-16897"/>
<dbReference type="EMDB" id="EMD-16899"/>
<dbReference type="EMDB" id="EMD-17719"/>
<dbReference type="EMDB" id="EMD-19460"/>
<dbReference type="EMDB" id="EMD-21233"/>
<dbReference type="EMDB" id="EMD-21242"/>
<dbReference type="EMDB" id="EMD-23096"/>
<dbReference type="EMDB" id="EMD-23121"/>
<dbReference type="EMDB" id="EMD-36836"/>
<dbReference type="EMDB" id="EMD-36837"/>
<dbReference type="EMDB" id="EMD-3842"/>
<dbReference type="EMDB" id="EMD-3843"/>
<dbReference type="EMDB" id="EMD-38632"/>
<dbReference type="EMDB" id="EMD-38633"/>
<dbReference type="EMDB" id="EMD-38634"/>
<dbReference type="EMDB" id="EMD-38635"/>
<dbReference type="EMDB" id="EMD-4434"/>
<dbReference type="SMR" id="Q9Y6G3"/>
<dbReference type="BioGRID" id="118800">
    <property type="interactions" value="266"/>
</dbReference>
<dbReference type="ComplexPortal" id="CPX-5226">
    <property type="entry name" value="39S mitochondrial large ribosomal subunit"/>
</dbReference>
<dbReference type="CORUM" id="Q9Y6G3"/>
<dbReference type="FunCoup" id="Q9Y6G3">
    <property type="interactions" value="866"/>
</dbReference>
<dbReference type="IntAct" id="Q9Y6G3">
    <property type="interactions" value="170"/>
</dbReference>
<dbReference type="STRING" id="9606.ENSP00000449884"/>
<dbReference type="GlyGen" id="Q9Y6G3">
    <property type="glycosylation" value="1 site, 1 O-linked glycan (1 site)"/>
</dbReference>
<dbReference type="iPTMnet" id="Q9Y6G3"/>
<dbReference type="PhosphoSitePlus" id="Q9Y6G3"/>
<dbReference type="BioMuta" id="MRPL42"/>
<dbReference type="DMDM" id="24212391"/>
<dbReference type="jPOST" id="Q9Y6G3"/>
<dbReference type="MassIVE" id="Q9Y6G3"/>
<dbReference type="PaxDb" id="9606-ENSP00000449884"/>
<dbReference type="PeptideAtlas" id="Q9Y6G3"/>
<dbReference type="ProteomicsDB" id="86675"/>
<dbReference type="Pumba" id="Q9Y6G3"/>
<dbReference type="TopDownProteomics" id="Q9Y6G3"/>
<dbReference type="Antibodypedia" id="30057">
    <property type="antibodies" value="217 antibodies from 21 providers"/>
</dbReference>
<dbReference type="DNASU" id="28977"/>
<dbReference type="Ensembl" id="ENST00000549561.6">
    <property type="protein sequence ID" value="ENSP00000449392.1"/>
    <property type="gene ID" value="ENSG00000198015.14"/>
</dbReference>
<dbReference type="Ensembl" id="ENST00000549982.6">
    <property type="protein sequence ID" value="ENSP00000449884.1"/>
    <property type="gene ID" value="ENSG00000198015.14"/>
</dbReference>
<dbReference type="Ensembl" id="ENST00000552217.6">
    <property type="protein sequence ID" value="ENSP00000447547.1"/>
    <property type="gene ID" value="ENSG00000198015.14"/>
</dbReference>
<dbReference type="GeneID" id="28977"/>
<dbReference type="KEGG" id="hsa:28977"/>
<dbReference type="MANE-Select" id="ENST00000549982.6">
    <property type="protein sequence ID" value="ENSP00000449884.1"/>
    <property type="RefSeq nucleotide sequence ID" value="NM_014050.4"/>
    <property type="RefSeq protein sequence ID" value="NP_054769.1"/>
</dbReference>
<dbReference type="UCSC" id="uc001tcr.4">
    <property type="organism name" value="human"/>
</dbReference>
<dbReference type="AGR" id="HGNC:14493"/>
<dbReference type="CTD" id="28977"/>
<dbReference type="DisGeNET" id="28977"/>
<dbReference type="GeneCards" id="MRPL42"/>
<dbReference type="HGNC" id="HGNC:14493">
    <property type="gene designation" value="MRPL42"/>
</dbReference>
<dbReference type="HPA" id="ENSG00000198015">
    <property type="expression patterns" value="Low tissue specificity"/>
</dbReference>
<dbReference type="MIM" id="611847">
    <property type="type" value="gene"/>
</dbReference>
<dbReference type="neXtProt" id="NX_Q9Y6G3"/>
<dbReference type="OpenTargets" id="ENSG00000198015"/>
<dbReference type="PharmGKB" id="PA30974"/>
<dbReference type="VEuPathDB" id="HostDB:ENSG00000198015"/>
<dbReference type="eggNOG" id="KOG4106">
    <property type="taxonomic scope" value="Eukaryota"/>
</dbReference>
<dbReference type="GeneTree" id="ENSGT00390000010491"/>
<dbReference type="InParanoid" id="Q9Y6G3"/>
<dbReference type="OMA" id="MASGHLC"/>
<dbReference type="OrthoDB" id="1107506at2759"/>
<dbReference type="PAN-GO" id="Q9Y6G3">
    <property type="GO annotations" value="1 GO annotation based on evolutionary models"/>
</dbReference>
<dbReference type="PhylomeDB" id="Q9Y6G3"/>
<dbReference type="TreeFam" id="TF324368"/>
<dbReference type="PathwayCommons" id="Q9Y6G3"/>
<dbReference type="Reactome" id="R-HSA-5368286">
    <property type="pathway name" value="Mitochondrial translation initiation"/>
</dbReference>
<dbReference type="Reactome" id="R-HSA-5389840">
    <property type="pathway name" value="Mitochondrial translation elongation"/>
</dbReference>
<dbReference type="Reactome" id="R-HSA-5419276">
    <property type="pathway name" value="Mitochondrial translation termination"/>
</dbReference>
<dbReference type="SignaLink" id="Q9Y6G3"/>
<dbReference type="SIGNOR" id="Q9Y6G3"/>
<dbReference type="BioGRID-ORCS" id="28977">
    <property type="hits" value="160 hits in 1174 CRISPR screens"/>
</dbReference>
<dbReference type="ChiTaRS" id="MRPL42">
    <property type="organism name" value="human"/>
</dbReference>
<dbReference type="EvolutionaryTrace" id="Q9Y6G3"/>
<dbReference type="GeneWiki" id="Mitochondrial_ribosomal_protein_L42"/>
<dbReference type="GenomeRNAi" id="28977"/>
<dbReference type="Pharos" id="Q9Y6G3">
    <property type="development level" value="Tbio"/>
</dbReference>
<dbReference type="PRO" id="PR:Q9Y6G3"/>
<dbReference type="Proteomes" id="UP000005640">
    <property type="component" value="Chromosome 12"/>
</dbReference>
<dbReference type="RNAct" id="Q9Y6G3">
    <property type="molecule type" value="protein"/>
</dbReference>
<dbReference type="Bgee" id="ENSG00000198015">
    <property type="expression patterns" value="Expressed in adrenal tissue and 207 other cell types or tissues"/>
</dbReference>
<dbReference type="ExpressionAtlas" id="Q9Y6G3">
    <property type="expression patterns" value="baseline and differential"/>
</dbReference>
<dbReference type="GO" id="GO:0005743">
    <property type="term" value="C:mitochondrial inner membrane"/>
    <property type="evidence" value="ECO:0000304"/>
    <property type="project" value="Reactome"/>
</dbReference>
<dbReference type="GO" id="GO:0005762">
    <property type="term" value="C:mitochondrial large ribosomal subunit"/>
    <property type="evidence" value="ECO:0000314"/>
    <property type="project" value="UniProtKB"/>
</dbReference>
<dbReference type="GO" id="GO:0005763">
    <property type="term" value="C:mitochondrial small ribosomal subunit"/>
    <property type="evidence" value="ECO:0000314"/>
    <property type="project" value="UniProtKB"/>
</dbReference>
<dbReference type="GO" id="GO:0005739">
    <property type="term" value="C:mitochondrion"/>
    <property type="evidence" value="ECO:0000314"/>
    <property type="project" value="UniProtKB"/>
</dbReference>
<dbReference type="GO" id="GO:0005886">
    <property type="term" value="C:plasma membrane"/>
    <property type="evidence" value="ECO:0000314"/>
    <property type="project" value="HPA"/>
</dbReference>
<dbReference type="GO" id="GO:0003723">
    <property type="term" value="F:RNA binding"/>
    <property type="evidence" value="ECO:0007005"/>
    <property type="project" value="UniProtKB"/>
</dbReference>
<dbReference type="GO" id="GO:0003735">
    <property type="term" value="F:structural constituent of ribosome"/>
    <property type="evidence" value="ECO:0000303"/>
    <property type="project" value="UniProtKB"/>
</dbReference>
<dbReference type="GO" id="GO:0032543">
    <property type="term" value="P:mitochondrial translation"/>
    <property type="evidence" value="ECO:0000303"/>
    <property type="project" value="ComplexPortal"/>
</dbReference>
<dbReference type="GO" id="GO:0006412">
    <property type="term" value="P:translation"/>
    <property type="evidence" value="ECO:0000303"/>
    <property type="project" value="UniProtKB"/>
</dbReference>
<dbReference type="InterPro" id="IPR019346">
    <property type="entry name" value="Ribosomal_mL42"/>
</dbReference>
<dbReference type="PANTHER" id="PTHR13450:SF4">
    <property type="entry name" value="LARGE RIBOSOMAL SUBUNIT PROTEIN ML42"/>
    <property type="match status" value="1"/>
</dbReference>
<dbReference type="PANTHER" id="PTHR13450">
    <property type="entry name" value="MITOCHONDRIAL 39S RIBOSOMAL PROTEIN L42"/>
    <property type="match status" value="1"/>
</dbReference>
<dbReference type="Pfam" id="PF10210">
    <property type="entry name" value="MRP-S32"/>
    <property type="match status" value="1"/>
</dbReference>
<sequence length="142" mass="16661">MAVAAVKWVMSKRTILKHLFPVQNGALYCVCHKSTYSPLPDDYNCNVELALTSDGRTIVCYHPSVDIPYEHTKPIPRPDPVHNNEETHDQVLKTRLEEKVEHLEEGPMIEQLSKMFFTTKHRWYPHGRYHRCRKNLNPPKDR</sequence>
<keyword id="KW-0002">3D-structure</keyword>
<keyword id="KW-0496">Mitochondrion</keyword>
<keyword id="KW-1267">Proteomics identification</keyword>
<keyword id="KW-1185">Reference proteome</keyword>
<keyword id="KW-0687">Ribonucleoprotein</keyword>
<keyword id="KW-0689">Ribosomal protein</keyword>
<keyword id="KW-0809">Transit peptide</keyword>
<reference evidence="12" key="1">
    <citation type="submission" date="1998-07" db="EMBL/GenBank/DDBJ databases">
        <authorList>
            <person name="Mao Y.F."/>
            <person name="Peng Y."/>
            <person name="Dai M."/>
            <person name="Huang Q.H."/>
            <person name="Song H."/>
            <person name="Zhang Q.H."/>
            <person name="Mao M."/>
            <person name="Fu G."/>
            <person name="Luo M."/>
            <person name="Chen J.H."/>
            <person name="Hu R."/>
        </authorList>
    </citation>
    <scope>NUCLEOTIDE SEQUENCE [LARGE SCALE MRNA]</scope>
    <source>
        <tissue>Pituitary tumor</tissue>
    </source>
</reference>
<reference evidence="12" key="2">
    <citation type="submission" date="1999-03" db="EMBL/GenBank/DDBJ databases">
        <title>Isolating a new human cDNA.</title>
        <authorList>
            <person name="Chen J.H."/>
            <person name="Luo W.Q."/>
            <person name="Hu S.N."/>
            <person name="Li G.T."/>
            <person name="Jin J."/>
            <person name="Huang X.W."/>
            <person name="Zhou H.J."/>
            <person name="Yuan J.G."/>
            <person name="Qiang B.Q."/>
        </authorList>
    </citation>
    <scope>NUCLEOTIDE SEQUENCE [MRNA]</scope>
</reference>
<reference key="3">
    <citation type="journal article" date="2000" name="Genome Res.">
        <title>Cloning and functional analysis of cDNAs with open reading frames for 300 previously undefined genes expressed in CD34+ hematopoietic stem/progenitor cells.</title>
        <authorList>
            <person name="Zhang Q.-H."/>
            <person name="Ye M."/>
            <person name="Wu X.-Y."/>
            <person name="Ren S.-X."/>
            <person name="Zhao M."/>
            <person name="Zhao C.-J."/>
            <person name="Fu G."/>
            <person name="Shen Y."/>
            <person name="Fan H.-Y."/>
            <person name="Lu G."/>
            <person name="Zhong M."/>
            <person name="Xu X.-R."/>
            <person name="Han Z.-G."/>
            <person name="Zhang J.-W."/>
            <person name="Tao J."/>
            <person name="Huang Q.-H."/>
            <person name="Zhou J."/>
            <person name="Hu G.-X."/>
            <person name="Gu J."/>
            <person name="Chen S.-J."/>
            <person name="Chen Z."/>
        </authorList>
    </citation>
    <scope>NUCLEOTIDE SEQUENCE [LARGE SCALE MRNA]</scope>
    <source>
        <tissue>Umbilical cord blood</tissue>
    </source>
</reference>
<reference evidence="13" key="4">
    <citation type="journal article" date="2001" name="Genome Res.">
        <title>Towards a catalog of human genes and proteins: sequencing and analysis of 500 novel complete protein coding human cDNAs.</title>
        <authorList>
            <person name="Wiemann S."/>
            <person name="Weil B."/>
            <person name="Wellenreuther R."/>
            <person name="Gassenhuber J."/>
            <person name="Glassl S."/>
            <person name="Ansorge W."/>
            <person name="Boecher M."/>
            <person name="Bloecker H."/>
            <person name="Bauersachs S."/>
            <person name="Blum H."/>
            <person name="Lauber J."/>
            <person name="Duesterhoeft A."/>
            <person name="Beyer A."/>
            <person name="Koehrer K."/>
            <person name="Strack N."/>
            <person name="Mewes H.-W."/>
            <person name="Ottenwaelder B."/>
            <person name="Obermaier B."/>
            <person name="Tampe J."/>
            <person name="Heubner D."/>
            <person name="Wambutt R."/>
            <person name="Korn B."/>
            <person name="Klein M."/>
            <person name="Poustka A."/>
        </authorList>
    </citation>
    <scope>NUCLEOTIDE SEQUENCE [LARGE SCALE MRNA]</scope>
    <source>
        <tissue>Brain</tissue>
    </source>
</reference>
<reference key="5">
    <citation type="journal article" date="2004" name="Nat. Genet.">
        <title>Complete sequencing and characterization of 21,243 full-length human cDNAs.</title>
        <authorList>
            <person name="Ota T."/>
            <person name="Suzuki Y."/>
            <person name="Nishikawa T."/>
            <person name="Otsuki T."/>
            <person name="Sugiyama T."/>
            <person name="Irie R."/>
            <person name="Wakamatsu A."/>
            <person name="Hayashi K."/>
            <person name="Sato H."/>
            <person name="Nagai K."/>
            <person name="Kimura K."/>
            <person name="Makita H."/>
            <person name="Sekine M."/>
            <person name="Obayashi M."/>
            <person name="Nishi T."/>
            <person name="Shibahara T."/>
            <person name="Tanaka T."/>
            <person name="Ishii S."/>
            <person name="Yamamoto J."/>
            <person name="Saito K."/>
            <person name="Kawai Y."/>
            <person name="Isono Y."/>
            <person name="Nakamura Y."/>
            <person name="Nagahari K."/>
            <person name="Murakami K."/>
            <person name="Yasuda T."/>
            <person name="Iwayanagi T."/>
            <person name="Wagatsuma M."/>
            <person name="Shiratori A."/>
            <person name="Sudo H."/>
            <person name="Hosoiri T."/>
            <person name="Kaku Y."/>
            <person name="Kodaira H."/>
            <person name="Kondo H."/>
            <person name="Sugawara M."/>
            <person name="Takahashi M."/>
            <person name="Kanda K."/>
            <person name="Yokoi T."/>
            <person name="Furuya T."/>
            <person name="Kikkawa E."/>
            <person name="Omura Y."/>
            <person name="Abe K."/>
            <person name="Kamihara K."/>
            <person name="Katsuta N."/>
            <person name="Sato K."/>
            <person name="Tanikawa M."/>
            <person name="Yamazaki M."/>
            <person name="Ninomiya K."/>
            <person name="Ishibashi T."/>
            <person name="Yamashita H."/>
            <person name="Murakawa K."/>
            <person name="Fujimori K."/>
            <person name="Tanai H."/>
            <person name="Kimata M."/>
            <person name="Watanabe M."/>
            <person name="Hiraoka S."/>
            <person name="Chiba Y."/>
            <person name="Ishida S."/>
            <person name="Ono Y."/>
            <person name="Takiguchi S."/>
            <person name="Watanabe S."/>
            <person name="Yosida M."/>
            <person name="Hotuta T."/>
            <person name="Kusano J."/>
            <person name="Kanehori K."/>
            <person name="Takahashi-Fujii A."/>
            <person name="Hara H."/>
            <person name="Tanase T.-O."/>
            <person name="Nomura Y."/>
            <person name="Togiya S."/>
            <person name="Komai F."/>
            <person name="Hara R."/>
            <person name="Takeuchi K."/>
            <person name="Arita M."/>
            <person name="Imose N."/>
            <person name="Musashino K."/>
            <person name="Yuuki H."/>
            <person name="Oshima A."/>
            <person name="Sasaki N."/>
            <person name="Aotsuka S."/>
            <person name="Yoshikawa Y."/>
            <person name="Matsunawa H."/>
            <person name="Ichihara T."/>
            <person name="Shiohata N."/>
            <person name="Sano S."/>
            <person name="Moriya S."/>
            <person name="Momiyama H."/>
            <person name="Satoh N."/>
            <person name="Takami S."/>
            <person name="Terashima Y."/>
            <person name="Suzuki O."/>
            <person name="Nakagawa S."/>
            <person name="Senoh A."/>
            <person name="Mizoguchi H."/>
            <person name="Goto Y."/>
            <person name="Shimizu F."/>
            <person name="Wakebe H."/>
            <person name="Hishigaki H."/>
            <person name="Watanabe T."/>
            <person name="Sugiyama A."/>
            <person name="Takemoto M."/>
            <person name="Kawakami B."/>
            <person name="Yamazaki M."/>
            <person name="Watanabe K."/>
            <person name="Kumagai A."/>
            <person name="Itakura S."/>
            <person name="Fukuzumi Y."/>
            <person name="Fujimori Y."/>
            <person name="Komiyama M."/>
            <person name="Tashiro H."/>
            <person name="Tanigami A."/>
            <person name="Fujiwara T."/>
            <person name="Ono T."/>
            <person name="Yamada K."/>
            <person name="Fujii Y."/>
            <person name="Ozaki K."/>
            <person name="Hirao M."/>
            <person name="Ohmori Y."/>
            <person name="Kawabata A."/>
            <person name="Hikiji T."/>
            <person name="Kobatake N."/>
            <person name="Inagaki H."/>
            <person name="Ikema Y."/>
            <person name="Okamoto S."/>
            <person name="Okitani R."/>
            <person name="Kawakami T."/>
            <person name="Noguchi S."/>
            <person name="Itoh T."/>
            <person name="Shigeta K."/>
            <person name="Senba T."/>
            <person name="Matsumura K."/>
            <person name="Nakajima Y."/>
            <person name="Mizuno T."/>
            <person name="Morinaga M."/>
            <person name="Sasaki M."/>
            <person name="Togashi T."/>
            <person name="Oyama M."/>
            <person name="Hata H."/>
            <person name="Watanabe M."/>
            <person name="Komatsu T."/>
            <person name="Mizushima-Sugano J."/>
            <person name="Satoh T."/>
            <person name="Shirai Y."/>
            <person name="Takahashi Y."/>
            <person name="Nakagawa K."/>
            <person name="Okumura K."/>
            <person name="Nagase T."/>
            <person name="Nomura N."/>
            <person name="Kikuchi H."/>
            <person name="Masuho Y."/>
            <person name="Yamashita R."/>
            <person name="Nakai K."/>
            <person name="Yada T."/>
            <person name="Nakamura Y."/>
            <person name="Ohara O."/>
            <person name="Isogai T."/>
            <person name="Sugano S."/>
        </authorList>
    </citation>
    <scope>NUCLEOTIDE SEQUENCE [LARGE SCALE MRNA]</scope>
</reference>
<reference evidence="12" key="6">
    <citation type="submission" date="2004-06" db="EMBL/GenBank/DDBJ databases">
        <title>Cloning of human full open reading frames in Gateway(TM) system entry vector (pDONR201).</title>
        <authorList>
            <person name="Ebert L."/>
            <person name="Schick M."/>
            <person name="Neubert P."/>
            <person name="Schatten R."/>
            <person name="Henze S."/>
            <person name="Korn B."/>
        </authorList>
    </citation>
    <scope>NUCLEOTIDE SEQUENCE [LARGE SCALE MRNA]</scope>
</reference>
<reference evidence="12" key="7">
    <citation type="submission" date="2005-07" db="EMBL/GenBank/DDBJ databases">
        <authorList>
            <person name="Mural R.J."/>
            <person name="Istrail S."/>
            <person name="Sutton G.G."/>
            <person name="Florea L."/>
            <person name="Halpern A.L."/>
            <person name="Mobarry C.M."/>
            <person name="Lippert R."/>
            <person name="Walenz B."/>
            <person name="Shatkay H."/>
            <person name="Dew I."/>
            <person name="Miller J.R."/>
            <person name="Flanigan M.J."/>
            <person name="Edwards N.J."/>
            <person name="Bolanos R."/>
            <person name="Fasulo D."/>
            <person name="Halldorsson B.V."/>
            <person name="Hannenhalli S."/>
            <person name="Turner R."/>
            <person name="Yooseph S."/>
            <person name="Lu F."/>
            <person name="Nusskern D.R."/>
            <person name="Shue B.C."/>
            <person name="Zheng X.H."/>
            <person name="Zhong F."/>
            <person name="Delcher A.L."/>
            <person name="Huson D.H."/>
            <person name="Kravitz S.A."/>
            <person name="Mouchard L."/>
            <person name="Reinert K."/>
            <person name="Remington K.A."/>
            <person name="Clark A.G."/>
            <person name="Waterman M.S."/>
            <person name="Eichler E.E."/>
            <person name="Adams M.D."/>
            <person name="Hunkapiller M.W."/>
            <person name="Myers E.W."/>
            <person name="Venter J.C."/>
        </authorList>
    </citation>
    <scope>NUCLEOTIDE SEQUENCE [LARGE SCALE GENOMIC DNA]</scope>
</reference>
<reference key="8">
    <citation type="journal article" date="2004" name="Genome Res.">
        <title>The status, quality, and expansion of the NIH full-length cDNA project: the Mammalian Gene Collection (MGC).</title>
        <authorList>
            <consortium name="The MGC Project Team"/>
        </authorList>
    </citation>
    <scope>NUCLEOTIDE SEQUENCE [LARGE SCALE MRNA]</scope>
    <source>
        <tissue>Placenta</tissue>
    </source>
</reference>
<reference key="9">
    <citation type="journal article" date="2001" name="Genomics">
        <title>The human mitochondrial ribosomal protein genes: mapping of 54 genes to the chromosomes and implications for human disorders.</title>
        <authorList>
            <person name="Kenmochi N."/>
            <person name="Suzuki T."/>
            <person name="Uechi T."/>
            <person name="Magoori M."/>
            <person name="Kuniba M."/>
            <person name="Higa S."/>
            <person name="Watanabe K."/>
            <person name="Tanaka T."/>
        </authorList>
    </citation>
    <scope>NUCLEOTIDE SEQUENCE [GENOMIC DNA] OF 78-128</scope>
</reference>
<reference evidence="9" key="10">
    <citation type="journal article" date="2001" name="J. Biol. Chem.">
        <title>The small subunit of the mammalian mitochondrial ribosome: identification of the full complement of ribosomal proteins present.</title>
        <authorList>
            <person name="Koc E.C."/>
            <person name="Burkhart W."/>
            <person name="Blackburn K."/>
            <person name="Moseley A."/>
            <person name="Spremulli L.L."/>
        </authorList>
    </citation>
    <scope>IDENTIFICATION IN THE MITOCHONDRIAL RIBOSOME SMALL SUBUNIT</scope>
    <scope>IDENTIFICATION BY MASS SPECTROMETRY</scope>
</reference>
<reference key="11">
    <citation type="journal article" date="2001" name="J. Biol. Chem.">
        <title>The large subunit of the mammalian mitochondrial ribosome. Analysis of the complement of ribosomal proteins present.</title>
        <authorList>
            <person name="Koc E.C."/>
            <person name="Burkhart W."/>
            <person name="Blackburn K."/>
            <person name="Moyer M.B."/>
            <person name="Schlatzer D.M."/>
            <person name="Moseley A."/>
            <person name="Spremulli L.L."/>
        </authorList>
    </citation>
    <scope>IDENTIFICATION IN THE MITOCHONDRIAL RIBOSOME LARGE SUBUNIT</scope>
    <scope>IDENTIFICATION BY MASS SPECTROMETRY</scope>
</reference>
<reference key="12">
    <citation type="journal article" date="2011" name="BMC Syst. Biol.">
        <title>Initial characterization of the human central proteome.</title>
        <authorList>
            <person name="Burkard T.R."/>
            <person name="Planyavsky M."/>
            <person name="Kaupe I."/>
            <person name="Breitwieser F.P."/>
            <person name="Buerckstuemmer T."/>
            <person name="Bennett K.L."/>
            <person name="Superti-Furga G."/>
            <person name="Colinge J."/>
        </authorList>
    </citation>
    <scope>IDENTIFICATION BY MASS SPECTROMETRY [LARGE SCALE ANALYSIS]</scope>
</reference>
<reference key="13">
    <citation type="journal article" date="2015" name="Proteomics">
        <title>N-terminome analysis of the human mitochondrial proteome.</title>
        <authorList>
            <person name="Vaca Jacome A.S."/>
            <person name="Rabilloud T."/>
            <person name="Schaeffer-Reiss C."/>
            <person name="Rompais M."/>
            <person name="Ayoub D."/>
            <person name="Lane L."/>
            <person name="Bairoch A."/>
            <person name="Van Dorsselaer A."/>
            <person name="Carapito C."/>
        </authorList>
    </citation>
    <scope>IDENTIFICATION BY MASS SPECTROMETRY [LARGE SCALE ANALYSIS]</scope>
</reference>
<reference evidence="14" key="14">
    <citation type="journal article" date="2014" name="Science">
        <title>Structure of the large ribosomal subunit from human mitochondria.</title>
        <authorList>
            <person name="Brown A."/>
            <person name="Amunts A."/>
            <person name="Bai X.C."/>
            <person name="Sugimoto Y."/>
            <person name="Edwards P.C."/>
            <person name="Murshudov G."/>
            <person name="Scheres S.H."/>
            <person name="Ramakrishnan V."/>
        </authorList>
    </citation>
    <scope>STRUCTURE BY ELECTRON MICROSCOPY (3.40 ANGSTROMS)</scope>
    <scope>SUBCELLULAR LOCATION</scope>
    <scope>SUBUNIT</scope>
</reference>
<reference evidence="15" key="15">
    <citation type="journal article" date="2015" name="Science">
        <title>Ribosome. The structure of the human mitochondrial ribosome.</title>
        <authorList>
            <person name="Amunts A."/>
            <person name="Brown A."/>
            <person name="Toots J."/>
            <person name="Scheres S.H."/>
            <person name="Ramakrishnan V."/>
        </authorList>
    </citation>
    <scope>STRUCTURE BY ELECTRON MICROSCOPY (3.50 ANGSTROMS)</scope>
    <scope>SUBCELLULAR LOCATION</scope>
    <scope>SUBUNIT</scope>
</reference>
<reference evidence="16 17" key="16">
    <citation type="journal article" date="2017" name="Nat. Struct. Mol. Biol.">
        <title>Structures of the human mitochondrial ribosome in native states of assembly.</title>
        <authorList>
            <person name="Brown A."/>
            <person name="Rathore S."/>
            <person name="Kimanius D."/>
            <person name="Aibara S."/>
            <person name="Bai X.C."/>
            <person name="Rorbach J."/>
            <person name="Amunts A."/>
            <person name="Ramakrishnan V."/>
        </authorList>
    </citation>
    <scope>STRUCTURE BY ELECTRON MICROSCOPY (3.03 ANGSTROMS)</scope>
    <scope>SUBCELLULAR LOCATION</scope>
    <scope>SUBUNIT</scope>
</reference>
<reference evidence="18 19" key="17">
    <citation type="journal article" date="2022" name="Nat. Commun.">
        <title>A late-stage assembly checkpoint of the human mitochondrial ribosome large subunit.</title>
        <authorList>
            <person name="Rebelo-Guiomar P."/>
            <person name="Pellegrino S."/>
            <person name="Dent K.C."/>
            <person name="Sas-Chen A."/>
            <person name="Miller-Fleming L."/>
            <person name="Garone C."/>
            <person name="Van Haute L."/>
            <person name="Rogan J.F."/>
            <person name="Dinan A."/>
            <person name="Firth A.E."/>
            <person name="Andrews B."/>
            <person name="Whitworth A.J."/>
            <person name="Schwartz S."/>
            <person name="Warren A.J."/>
            <person name="Minczuk M."/>
        </authorList>
    </citation>
    <scope>STRUCTURE BY ELECTRON MICROSCOPY (2.9 ANGSTROMS) IN COMPLEX WITH MTLSU</scope>
    <scope>SUBUNIT</scope>
</reference>
<comment type="subunit">
    <text evidence="3 4 5 6">Component of the mitochondrial large ribosomal subunit (mt-LSU) (PubMed:25278503, PubMed:25838379, PubMed:28892042, PubMed:35177605). Mature mammalian 55S mitochondrial ribosomes consist of a small (28S) and a large (39S) subunit. The 28S small subunit contains a 12S ribosomal RNA (12S mt-rRNA) and 30 different proteins. The 39S large subunit contains a 16S rRNA (16S mt-rRNA), a copy of mitochondrial valine transfer RNA (mt-tRNA(Val)), which plays an integral structural role, and 52 different proteins.</text>
</comment>
<comment type="subcellular location">
    <subcellularLocation>
        <location evidence="2 3 4 5">Mitochondrion</location>
    </subcellularLocation>
</comment>
<comment type="similarity">
    <text evidence="9">Belongs to the mitochondrion-specific ribosomal protein mL42 family.</text>
</comment>
<comment type="caution">
    <text evidence="10 11">Has also been found in a preparation of mitochondrial small ribosomal subunits. Was erroneously (PubMed:11279123, PubMed:11551941) assigned to be MRP-S32.</text>
</comment>
<comment type="sequence caution" evidence="9">
    <conflict type="frameshift">
        <sequence resource="EMBL-CDS" id="AAF36124"/>
    </conflict>
</comment>
<gene>
    <name type="primary">MRPL42</name>
    <name type="synonym">MRPL31</name>
    <name type="synonym">MRPS32</name>
    <name type="synonym">RPML31</name>
    <name type="ORF">HSPC204</name>
    <name type="ORF">PTD007</name>
</gene>
<organism evidence="12">
    <name type="scientific">Homo sapiens</name>
    <name type="common">Human</name>
    <dbReference type="NCBI Taxonomy" id="9606"/>
    <lineage>
        <taxon>Eukaryota</taxon>
        <taxon>Metazoa</taxon>
        <taxon>Chordata</taxon>
        <taxon>Craniata</taxon>
        <taxon>Vertebrata</taxon>
        <taxon>Euteleostomi</taxon>
        <taxon>Mammalia</taxon>
        <taxon>Eutheria</taxon>
        <taxon>Euarchontoglires</taxon>
        <taxon>Primates</taxon>
        <taxon>Haplorrhini</taxon>
        <taxon>Catarrhini</taxon>
        <taxon>Hominidae</taxon>
        <taxon>Homo</taxon>
    </lineage>
</organism>
<feature type="transit peptide" description="Mitochondrion" evidence="1">
    <location>
        <begin position="1"/>
        <end position="32"/>
    </location>
</feature>
<feature type="chain" id="PRO_0000087724" description="Large ribosomal subunit protein mL42">
    <location>
        <begin position="33"/>
        <end position="142"/>
    </location>
</feature>
<feature type="strand" evidence="21">
    <location>
        <begin position="43"/>
        <end position="45"/>
    </location>
</feature>
<feature type="strand" evidence="20">
    <location>
        <begin position="48"/>
        <end position="51"/>
    </location>
</feature>
<feature type="strand" evidence="20">
    <location>
        <begin position="55"/>
        <end position="61"/>
    </location>
</feature>
<feature type="helix" evidence="20">
    <location>
        <begin position="69"/>
        <end position="71"/>
    </location>
</feature>
<feature type="helix" evidence="20">
    <location>
        <begin position="105"/>
        <end position="116"/>
    </location>
</feature>
<feature type="helix" evidence="20">
    <location>
        <begin position="120"/>
        <end position="123"/>
    </location>
</feature>
<feature type="helix" evidence="20">
    <location>
        <begin position="128"/>
        <end position="133"/>
    </location>
</feature>
<accession>Q9Y6G3</accession>
<accession>Q6FID1</accession>
<accession>Q96Q48</accession>
<accession>Q9P0S1</accession>
<protein>
    <recommendedName>
        <fullName evidence="8">Large ribosomal subunit protein mL42</fullName>
    </recommendedName>
    <alternativeName>
        <fullName evidence="1">39S ribosomal protein L31, mitochondrial</fullName>
        <shortName>L31mt</shortName>
        <shortName>MRP-L31</shortName>
    </alternativeName>
    <alternativeName>
        <fullName evidence="7">39S ribosomal protein L42, mitochondrial</fullName>
        <shortName>L42mt</shortName>
        <shortName>MRP-L42</shortName>
    </alternativeName>
</protein>
<name>RM42_HUMAN</name>
<evidence type="ECO:0000250" key="1">
    <source>
        <dbReference type="UniProtKB" id="P0C2B9"/>
    </source>
</evidence>
<evidence type="ECO:0000269" key="2">
    <source>
    </source>
</evidence>
<evidence type="ECO:0000269" key="3">
    <source>
    </source>
</evidence>
<evidence type="ECO:0000269" key="4">
    <source>
    </source>
</evidence>
<evidence type="ECO:0000269" key="5">
    <source>
    </source>
</evidence>
<evidence type="ECO:0000269" key="6">
    <source>
    </source>
</evidence>
<evidence type="ECO:0000303" key="7">
    <source>
    </source>
</evidence>
<evidence type="ECO:0000303" key="8">
    <source>
    </source>
</evidence>
<evidence type="ECO:0000305" key="9"/>
<evidence type="ECO:0000305" key="10">
    <source>
    </source>
</evidence>
<evidence type="ECO:0000305" key="11">
    <source>
    </source>
</evidence>
<evidence type="ECO:0000312" key="12">
    <source>
        <dbReference type="EMBL" id="BAA91054.1"/>
    </source>
</evidence>
<evidence type="ECO:0000312" key="13">
    <source>
        <dbReference type="EMBL" id="CAB66594.1"/>
    </source>
</evidence>
<evidence type="ECO:0007744" key="14">
    <source>
        <dbReference type="PDB" id="3J7Y"/>
    </source>
</evidence>
<evidence type="ECO:0007744" key="15">
    <source>
        <dbReference type="PDB" id="3J9M"/>
    </source>
</evidence>
<evidence type="ECO:0007744" key="16">
    <source>
        <dbReference type="PDB" id="5OOL"/>
    </source>
</evidence>
<evidence type="ECO:0007744" key="17">
    <source>
        <dbReference type="PDB" id="5OOM"/>
    </source>
</evidence>
<evidence type="ECO:0007744" key="18">
    <source>
        <dbReference type="PDB" id="7QH6"/>
    </source>
</evidence>
<evidence type="ECO:0007744" key="19">
    <source>
        <dbReference type="PDB" id="7QH7"/>
    </source>
</evidence>
<evidence type="ECO:0007829" key="20">
    <source>
        <dbReference type="PDB" id="7OF0"/>
    </source>
</evidence>
<evidence type="ECO:0007829" key="21">
    <source>
        <dbReference type="PDB" id="8QU5"/>
    </source>
</evidence>